<accession>Q70PU1</accession>
<accession>B2XZX6</accession>
<accession>B4QG79</accession>
<accession>Q2XY96</accession>
<sequence length="184" mass="19788">MANKALILLAVLFCAQAVLGVTIVSKSEWGGRSATSKTSLASYLSYAVIHHTAGNYCSTKAACITQLKNIQAYHMDSLGWADIGYNFLIGGDGNVYEGRGWNVMGAHATNWNSKSIGISFLGNYNTNTLTSAQITAAKGLLSDAVSRGQIVSGYILYGHRQVGSTECPGTNIWNEIRTWSNWKA</sequence>
<dbReference type="EC" id="3.5.1.28"/>
<dbReference type="EMBL" id="AJ556611">
    <property type="protein sequence ID" value="CAD89176.1"/>
    <property type="molecule type" value="Genomic_DNA"/>
</dbReference>
<dbReference type="EMBL" id="CM000362">
    <property type="protein sequence ID" value="EDX06229.1"/>
    <property type="molecule type" value="Genomic_DNA"/>
</dbReference>
<dbReference type="EMBL" id="DQ138765">
    <property type="protein sequence ID" value="ABA86371.1"/>
    <property type="molecule type" value="Genomic_DNA"/>
</dbReference>
<dbReference type="EMBL" id="DQ138766">
    <property type="protein sequence ID" value="ABA86372.1"/>
    <property type="molecule type" value="Genomic_DNA"/>
</dbReference>
<dbReference type="EMBL" id="EU313688">
    <property type="protein sequence ID" value="ABY56488.1"/>
    <property type="molecule type" value="Genomic_DNA"/>
</dbReference>
<dbReference type="EMBL" id="EU313689">
    <property type="protein sequence ID" value="ABY56489.1"/>
    <property type="molecule type" value="Genomic_DNA"/>
</dbReference>
<dbReference type="EMBL" id="EU313690">
    <property type="protein sequence ID" value="ABY56490.1"/>
    <property type="molecule type" value="Genomic_DNA"/>
</dbReference>
<dbReference type="EMBL" id="EU313691">
    <property type="protein sequence ID" value="ABY56491.1"/>
    <property type="molecule type" value="Genomic_DNA"/>
</dbReference>
<dbReference type="EMBL" id="EU313692">
    <property type="protein sequence ID" value="ABY56492.1"/>
    <property type="molecule type" value="Genomic_DNA"/>
</dbReference>
<dbReference type="EMBL" id="EU313693">
    <property type="protein sequence ID" value="ABY56493.1"/>
    <property type="molecule type" value="Genomic_DNA"/>
</dbReference>
<dbReference type="EMBL" id="EU313694">
    <property type="protein sequence ID" value="ABY56494.1"/>
    <property type="molecule type" value="Genomic_DNA"/>
</dbReference>
<dbReference type="EMBL" id="EU313695">
    <property type="protein sequence ID" value="ABY56495.1"/>
    <property type="molecule type" value="Genomic_DNA"/>
</dbReference>
<dbReference type="EMBL" id="EU313696">
    <property type="protein sequence ID" value="ABY56496.1"/>
    <property type="molecule type" value="Genomic_DNA"/>
</dbReference>
<dbReference type="EMBL" id="EU313697">
    <property type="protein sequence ID" value="ABY56497.1"/>
    <property type="molecule type" value="Genomic_DNA"/>
</dbReference>
<dbReference type="EMBL" id="EU313698">
    <property type="protein sequence ID" value="ABY56498.1"/>
    <property type="molecule type" value="Genomic_DNA"/>
</dbReference>
<dbReference type="EMBL" id="EU313699">
    <property type="protein sequence ID" value="ABY56499.1"/>
    <property type="molecule type" value="Genomic_DNA"/>
</dbReference>
<dbReference type="EMBL" id="EU313700">
    <property type="protein sequence ID" value="ABY56500.1"/>
    <property type="molecule type" value="Genomic_DNA"/>
</dbReference>
<dbReference type="EMBL" id="EU313701">
    <property type="protein sequence ID" value="ABY56501.1"/>
    <property type="molecule type" value="Genomic_DNA"/>
</dbReference>
<dbReference type="EMBL" id="EU313702">
    <property type="protein sequence ID" value="ABY56502.1"/>
    <property type="molecule type" value="Genomic_DNA"/>
</dbReference>
<dbReference type="EMBL" id="EU313703">
    <property type="protein sequence ID" value="ABY56503.1"/>
    <property type="molecule type" value="Genomic_DNA"/>
</dbReference>
<dbReference type="SMR" id="Q70PU1"/>
<dbReference type="STRING" id="7240.Q70PU1"/>
<dbReference type="EnsemblMetazoa" id="FBtr0210505">
    <property type="protein sequence ID" value="FBpp0208997"/>
    <property type="gene ID" value="FBgn0068645"/>
</dbReference>
<dbReference type="EnsemblMetazoa" id="XM_002080608.4">
    <property type="protein sequence ID" value="XP_002080644.1"/>
    <property type="gene ID" value="LOC6733590"/>
</dbReference>
<dbReference type="GeneID" id="6733590"/>
<dbReference type="CTD" id="35862"/>
<dbReference type="HOGENOM" id="CLU_037559_3_2_1"/>
<dbReference type="OMA" id="CCSPIVP"/>
<dbReference type="OrthoDB" id="10001926at2759"/>
<dbReference type="PhylomeDB" id="Q70PU1"/>
<dbReference type="Proteomes" id="UP000000304">
    <property type="component" value="Chromosome 2R"/>
</dbReference>
<dbReference type="Bgee" id="FBgn0068645">
    <property type="expression patterns" value="Expressed in adult organism and 3 other cell types or tissues"/>
</dbReference>
<dbReference type="GO" id="GO:0005576">
    <property type="term" value="C:extracellular region"/>
    <property type="evidence" value="ECO:0007669"/>
    <property type="project" value="UniProtKB-SubCell"/>
</dbReference>
<dbReference type="GO" id="GO:0008745">
    <property type="term" value="F:N-acetylmuramoyl-L-alanine amidase activity"/>
    <property type="evidence" value="ECO:0007669"/>
    <property type="project" value="UniProtKB-EC"/>
</dbReference>
<dbReference type="GO" id="GO:0042834">
    <property type="term" value="F:peptidoglycan binding"/>
    <property type="evidence" value="ECO:0007669"/>
    <property type="project" value="InterPro"/>
</dbReference>
<dbReference type="GO" id="GO:0008270">
    <property type="term" value="F:zinc ion binding"/>
    <property type="evidence" value="ECO:0007669"/>
    <property type="project" value="InterPro"/>
</dbReference>
<dbReference type="GO" id="GO:0045087">
    <property type="term" value="P:innate immune response"/>
    <property type="evidence" value="ECO:0007669"/>
    <property type="project" value="UniProtKB-KW"/>
</dbReference>
<dbReference type="GO" id="GO:0002814">
    <property type="term" value="P:negative regulation of biosynthetic process of antibacterial peptides active against Gram-negative bacteria"/>
    <property type="evidence" value="ECO:0007669"/>
    <property type="project" value="EnsemblMetazoa"/>
</dbReference>
<dbReference type="GO" id="GO:0061060">
    <property type="term" value="P:negative regulation of peptidoglycan recognition protein signaling pathway"/>
    <property type="evidence" value="ECO:0007669"/>
    <property type="project" value="EnsemblMetazoa"/>
</dbReference>
<dbReference type="GO" id="GO:0009253">
    <property type="term" value="P:peptidoglycan catabolic process"/>
    <property type="evidence" value="ECO:0007669"/>
    <property type="project" value="InterPro"/>
</dbReference>
<dbReference type="GO" id="GO:0160032">
    <property type="term" value="P:Toll receptor ligand protein activation cascade"/>
    <property type="evidence" value="ECO:0007669"/>
    <property type="project" value="EnsemblMetazoa"/>
</dbReference>
<dbReference type="CDD" id="cd06583">
    <property type="entry name" value="PGRP"/>
    <property type="match status" value="1"/>
</dbReference>
<dbReference type="FunFam" id="3.40.80.10:FF:000001">
    <property type="entry name" value="Peptidoglycan recognition protein 1"/>
    <property type="match status" value="1"/>
</dbReference>
<dbReference type="Gene3D" id="3.40.80.10">
    <property type="entry name" value="Peptidoglycan recognition protein-like"/>
    <property type="match status" value="1"/>
</dbReference>
<dbReference type="InterPro" id="IPR036505">
    <property type="entry name" value="Amidase/PGRP_sf"/>
</dbReference>
<dbReference type="InterPro" id="IPR002502">
    <property type="entry name" value="Amidase_domain"/>
</dbReference>
<dbReference type="InterPro" id="IPR017331">
    <property type="entry name" value="Peptidoglycan_recognition"/>
</dbReference>
<dbReference type="InterPro" id="IPR015510">
    <property type="entry name" value="PGRP"/>
</dbReference>
<dbReference type="InterPro" id="IPR006619">
    <property type="entry name" value="PGRP_domain_met/bac"/>
</dbReference>
<dbReference type="PANTHER" id="PTHR11022">
    <property type="entry name" value="PEPTIDOGLYCAN RECOGNITION PROTEIN"/>
    <property type="match status" value="1"/>
</dbReference>
<dbReference type="PANTHER" id="PTHR11022:SF75">
    <property type="entry name" value="PEPTIDOGLYCAN-RECOGNITION PROTEIN SB1-RELATED"/>
    <property type="match status" value="1"/>
</dbReference>
<dbReference type="Pfam" id="PF01510">
    <property type="entry name" value="Amidase_2"/>
    <property type="match status" value="1"/>
</dbReference>
<dbReference type="PIRSF" id="PIRSF037945">
    <property type="entry name" value="PGRPs"/>
    <property type="match status" value="1"/>
</dbReference>
<dbReference type="SMART" id="SM00644">
    <property type="entry name" value="Ami_2"/>
    <property type="match status" value="1"/>
</dbReference>
<dbReference type="SMART" id="SM00701">
    <property type="entry name" value="PGRP"/>
    <property type="match status" value="1"/>
</dbReference>
<dbReference type="SUPFAM" id="SSF55846">
    <property type="entry name" value="N-acetylmuramoyl-L-alanine amidase-like"/>
    <property type="match status" value="1"/>
</dbReference>
<name>PGSC2_DROSI</name>
<gene>
    <name type="primary">PGRP-SC2</name>
    <name type="ORF">GD10595</name>
</gene>
<organism>
    <name type="scientific">Drosophila simulans</name>
    <name type="common">Fruit fly</name>
    <dbReference type="NCBI Taxonomy" id="7240"/>
    <lineage>
        <taxon>Eukaryota</taxon>
        <taxon>Metazoa</taxon>
        <taxon>Ecdysozoa</taxon>
        <taxon>Arthropoda</taxon>
        <taxon>Hexapoda</taxon>
        <taxon>Insecta</taxon>
        <taxon>Pterygota</taxon>
        <taxon>Neoptera</taxon>
        <taxon>Endopterygota</taxon>
        <taxon>Diptera</taxon>
        <taxon>Brachycera</taxon>
        <taxon>Muscomorpha</taxon>
        <taxon>Ephydroidea</taxon>
        <taxon>Drosophilidae</taxon>
        <taxon>Drosophila</taxon>
        <taxon>Sophophora</taxon>
    </lineage>
</organism>
<proteinExistence type="inferred from homology"/>
<keyword id="KW-1015">Disulfide bond</keyword>
<keyword id="KW-0378">Hydrolase</keyword>
<keyword id="KW-0391">Immunity</keyword>
<keyword id="KW-0399">Innate immunity</keyword>
<keyword id="KW-0479">Metal-binding</keyword>
<keyword id="KW-1185">Reference proteome</keyword>
<keyword id="KW-0964">Secreted</keyword>
<keyword id="KW-0732">Signal</keyword>
<keyword id="KW-0862">Zinc</keyword>
<evidence type="ECO:0000250" key="1"/>
<evidence type="ECO:0000250" key="2">
    <source>
        <dbReference type="UniProtKB" id="P00806"/>
    </source>
</evidence>
<evidence type="ECO:0000250" key="3">
    <source>
        <dbReference type="UniProtKB" id="Q8INK6"/>
    </source>
</evidence>
<evidence type="ECO:0000255" key="4"/>
<evidence type="ECO:0000269" key="5">
    <source>
    </source>
</evidence>
<evidence type="ECO:0000305" key="6"/>
<protein>
    <recommendedName>
        <fullName>Peptidoglycan-recognition protein SC2</fullName>
        <ecNumber>3.5.1.28</ecNumber>
    </recommendedName>
</protein>
<feature type="signal peptide" evidence="4">
    <location>
        <begin position="1"/>
        <end position="20"/>
    </location>
</feature>
<feature type="chain" id="PRO_0000023913" description="Peptidoglycan-recognition protein SC2">
    <location>
        <begin position="21"/>
        <end position="184"/>
    </location>
</feature>
<feature type="domain" description="N-acetylmuramoyl-L-alanine amidase" evidence="4">
    <location>
        <begin position="45"/>
        <end position="169"/>
    </location>
</feature>
<feature type="binding site" evidence="3">
    <location>
        <position position="50"/>
    </location>
    <ligand>
        <name>Zn(2+)</name>
        <dbReference type="ChEBI" id="CHEBI:29105"/>
    </ligand>
</feature>
<feature type="binding site" evidence="3">
    <location>
        <position position="159"/>
    </location>
    <ligand>
        <name>Zn(2+)</name>
        <dbReference type="ChEBI" id="CHEBI:29105"/>
    </ligand>
</feature>
<feature type="binding site" evidence="3">
    <location>
        <position position="167"/>
    </location>
    <ligand>
        <name>Zn(2+)</name>
        <dbReference type="ChEBI" id="CHEBI:29105"/>
    </ligand>
</feature>
<feature type="site" description="Important for catalytic activity; essential for amidase activity and zinc hydrate coordination" evidence="2">
    <location>
        <position position="85"/>
    </location>
</feature>
<feature type="disulfide bond" evidence="1">
    <location>
        <begin position="57"/>
        <end position="63"/>
    </location>
</feature>
<feature type="sequence variant" description="In strain: 08FG." evidence="5">
    <original>L</original>
    <variation>V</variation>
    <location>
        <position position="12"/>
    </location>
</feature>
<comment type="function">
    <text evidence="1">N-acetylmuramyl-L-alanine amidase involved in innate immunity by degrading bacterial peptidoglycans (PGN). Probably plays a scavenger role by digesting biologically active PGN into biologically inactive fragments. Has no direct bacteriolytic activity (By similarity).</text>
</comment>
<comment type="catalytic activity">
    <reaction>
        <text>Hydrolyzes the link between N-acetylmuramoyl residues and L-amino acid residues in certain cell-wall glycopeptides.</text>
        <dbReference type="EC" id="3.5.1.28"/>
    </reaction>
</comment>
<comment type="cofactor">
    <cofactor evidence="3">
        <name>Zn(2+)</name>
        <dbReference type="ChEBI" id="CHEBI:29105"/>
    </cofactor>
</comment>
<comment type="subcellular location">
    <subcellularLocation>
        <location evidence="6">Secreted</location>
    </subcellularLocation>
</comment>
<comment type="similarity">
    <text evidence="6">Belongs to the N-acetylmuramoyl-L-alanine amidase 2 family.</text>
</comment>
<reference key="1">
    <citation type="journal article" date="2003" name="J. Mol. Evol.">
        <title>The evolution of parasite recognition genes in the innate immune system: purifying selection on Drosophila melanogaster peptidoglycan recognition proteins.</title>
        <authorList>
            <person name="Jiggins F.M."/>
            <person name="Hurst G.D.D."/>
        </authorList>
    </citation>
    <scope>NUCLEOTIDE SEQUENCE [GENOMIC DNA]</scope>
    <source>
        <strain>C167.4</strain>
    </source>
</reference>
<reference key="2">
    <citation type="journal article" date="2007" name="Nature">
        <title>Evolution of genes and genomes on the Drosophila phylogeny.</title>
        <authorList>
            <consortium name="Drosophila 12 genomes consortium"/>
        </authorList>
    </citation>
    <scope>NUCLEOTIDE SEQUENCE [LARGE SCALE GENOMIC DNA]</scope>
</reference>
<reference key="3">
    <citation type="journal article" date="2005" name="Mol. Biol. Evol.">
        <title>Intragenic Hill-Robertson interference influences selection intensity on synonymous mutations in Drosophila.</title>
        <authorList>
            <person name="Comeron J.M."/>
            <person name="Guthrie T.B."/>
        </authorList>
    </citation>
    <scope>NUCLEOTIDE SEQUENCE [GENOMIC DNA] OF 8-178</scope>
    <source>
        <strain>Ky-a</strain>
        <strain>Ky-b</strain>
    </source>
</reference>
<reference key="4">
    <citation type="journal article" date="2008" name="J. Mol. Evol.">
        <title>A new test for selection applied to codon usage in Drosophila simulans and D. mauritiana.</title>
        <authorList>
            <person name="Llopart A."/>
            <person name="Mabille A."/>
            <person name="Peters-Hall J.R."/>
            <person name="Comeron J.M."/>
            <person name="Kliman R.M."/>
        </authorList>
    </citation>
    <scope>NUCLEOTIDE SEQUENCE [GENOMIC DNA] OF 8-178</scope>
    <scope>VARIANT VAL-12</scope>
    <source>
        <strain>01FG</strain>
        <strain>02FG</strain>
        <strain>03FG</strain>
        <strain>04FG</strain>
        <strain>05FG</strain>
        <strain>06FG</strain>
        <strain>07FG</strain>
        <strain>08FG</strain>
        <strain>09FG</strain>
        <strain>10FG</strain>
        <strain>11FG</strain>
        <strain>12FG</strain>
        <strain>13FG</strain>
        <strain>14FG</strain>
        <strain>15FG</strain>
        <strain>16FG</strain>
    </source>
</reference>